<proteinExistence type="inferred from homology"/>
<dbReference type="EC" id="1.1.1.103" evidence="1"/>
<dbReference type="EMBL" id="CP000606">
    <property type="protein sequence ID" value="ABO25576.1"/>
    <property type="molecule type" value="Genomic_DNA"/>
</dbReference>
<dbReference type="RefSeq" id="WP_011867504.1">
    <property type="nucleotide sequence ID" value="NC_009092.1"/>
</dbReference>
<dbReference type="SMR" id="A3QJC8"/>
<dbReference type="STRING" id="323850.Shew_3710"/>
<dbReference type="KEGG" id="slo:Shew_3710"/>
<dbReference type="eggNOG" id="COG1063">
    <property type="taxonomic scope" value="Bacteria"/>
</dbReference>
<dbReference type="HOGENOM" id="CLU_026673_11_0_6"/>
<dbReference type="OrthoDB" id="9773078at2"/>
<dbReference type="UniPathway" id="UPA00046">
    <property type="reaction ID" value="UER00505"/>
</dbReference>
<dbReference type="Proteomes" id="UP000001558">
    <property type="component" value="Chromosome"/>
</dbReference>
<dbReference type="GO" id="GO:0005737">
    <property type="term" value="C:cytoplasm"/>
    <property type="evidence" value="ECO:0007669"/>
    <property type="project" value="UniProtKB-SubCell"/>
</dbReference>
<dbReference type="GO" id="GO:0008743">
    <property type="term" value="F:L-threonine 3-dehydrogenase activity"/>
    <property type="evidence" value="ECO:0007669"/>
    <property type="project" value="UniProtKB-UniRule"/>
</dbReference>
<dbReference type="GO" id="GO:0008270">
    <property type="term" value="F:zinc ion binding"/>
    <property type="evidence" value="ECO:0007669"/>
    <property type="project" value="UniProtKB-UniRule"/>
</dbReference>
<dbReference type="GO" id="GO:0019518">
    <property type="term" value="P:L-threonine catabolic process to glycine"/>
    <property type="evidence" value="ECO:0007669"/>
    <property type="project" value="UniProtKB-UniPathway"/>
</dbReference>
<dbReference type="Gene3D" id="3.90.180.10">
    <property type="entry name" value="Medium-chain alcohol dehydrogenases, catalytic domain"/>
    <property type="match status" value="1"/>
</dbReference>
<dbReference type="Gene3D" id="3.40.50.720">
    <property type="entry name" value="NAD(P)-binding Rossmann-like Domain"/>
    <property type="match status" value="1"/>
</dbReference>
<dbReference type="HAMAP" id="MF_00627">
    <property type="entry name" value="Thr_dehydrog"/>
    <property type="match status" value="1"/>
</dbReference>
<dbReference type="InterPro" id="IPR013149">
    <property type="entry name" value="ADH-like_C"/>
</dbReference>
<dbReference type="InterPro" id="IPR013154">
    <property type="entry name" value="ADH-like_N"/>
</dbReference>
<dbReference type="InterPro" id="IPR002328">
    <property type="entry name" value="ADH_Zn_CS"/>
</dbReference>
<dbReference type="InterPro" id="IPR011032">
    <property type="entry name" value="GroES-like_sf"/>
</dbReference>
<dbReference type="InterPro" id="IPR004627">
    <property type="entry name" value="L-Threonine_3-DHase"/>
</dbReference>
<dbReference type="InterPro" id="IPR036291">
    <property type="entry name" value="NAD(P)-bd_dom_sf"/>
</dbReference>
<dbReference type="InterPro" id="IPR020843">
    <property type="entry name" value="PKS_ER"/>
</dbReference>
<dbReference type="InterPro" id="IPR050129">
    <property type="entry name" value="Zn_alcohol_dh"/>
</dbReference>
<dbReference type="NCBIfam" id="NF003808">
    <property type="entry name" value="PRK05396.1"/>
    <property type="match status" value="1"/>
</dbReference>
<dbReference type="NCBIfam" id="TIGR00692">
    <property type="entry name" value="tdh"/>
    <property type="match status" value="1"/>
</dbReference>
<dbReference type="PANTHER" id="PTHR43401">
    <property type="entry name" value="L-THREONINE 3-DEHYDROGENASE"/>
    <property type="match status" value="1"/>
</dbReference>
<dbReference type="PANTHER" id="PTHR43401:SF2">
    <property type="entry name" value="L-THREONINE 3-DEHYDROGENASE"/>
    <property type="match status" value="1"/>
</dbReference>
<dbReference type="Pfam" id="PF08240">
    <property type="entry name" value="ADH_N"/>
    <property type="match status" value="1"/>
</dbReference>
<dbReference type="Pfam" id="PF00107">
    <property type="entry name" value="ADH_zinc_N"/>
    <property type="match status" value="1"/>
</dbReference>
<dbReference type="SMART" id="SM00829">
    <property type="entry name" value="PKS_ER"/>
    <property type="match status" value="1"/>
</dbReference>
<dbReference type="SUPFAM" id="SSF50129">
    <property type="entry name" value="GroES-like"/>
    <property type="match status" value="1"/>
</dbReference>
<dbReference type="SUPFAM" id="SSF51735">
    <property type="entry name" value="NAD(P)-binding Rossmann-fold domains"/>
    <property type="match status" value="1"/>
</dbReference>
<dbReference type="PROSITE" id="PS00059">
    <property type="entry name" value="ADH_ZINC"/>
    <property type="match status" value="1"/>
</dbReference>
<name>TDH_SHELP</name>
<reference key="1">
    <citation type="submission" date="2007-03" db="EMBL/GenBank/DDBJ databases">
        <title>Complete sequence of Shewanella loihica PV-4.</title>
        <authorList>
            <consortium name="US DOE Joint Genome Institute"/>
            <person name="Copeland A."/>
            <person name="Lucas S."/>
            <person name="Lapidus A."/>
            <person name="Barry K."/>
            <person name="Detter J.C."/>
            <person name="Glavina del Rio T."/>
            <person name="Hammon N."/>
            <person name="Israni S."/>
            <person name="Dalin E."/>
            <person name="Tice H."/>
            <person name="Pitluck S."/>
            <person name="Chain P."/>
            <person name="Malfatti S."/>
            <person name="Shin M."/>
            <person name="Vergez L."/>
            <person name="Schmutz J."/>
            <person name="Larimer F."/>
            <person name="Land M."/>
            <person name="Hauser L."/>
            <person name="Kyrpides N."/>
            <person name="Mikhailova N."/>
            <person name="Romine M.F."/>
            <person name="Serres G."/>
            <person name="Fredrickson J."/>
            <person name="Tiedje J."/>
            <person name="Richardson P."/>
        </authorList>
    </citation>
    <scope>NUCLEOTIDE SEQUENCE [LARGE SCALE GENOMIC DNA]</scope>
    <source>
        <strain>ATCC BAA-1088 / PV-4</strain>
    </source>
</reference>
<comment type="function">
    <text evidence="1">Catalyzes the NAD(+)-dependent oxidation of L-threonine to 2-amino-3-ketobutyrate.</text>
</comment>
<comment type="catalytic activity">
    <reaction evidence="1">
        <text>L-threonine + NAD(+) = (2S)-2-amino-3-oxobutanoate + NADH + H(+)</text>
        <dbReference type="Rhea" id="RHEA:13161"/>
        <dbReference type="ChEBI" id="CHEBI:15378"/>
        <dbReference type="ChEBI" id="CHEBI:57540"/>
        <dbReference type="ChEBI" id="CHEBI:57926"/>
        <dbReference type="ChEBI" id="CHEBI:57945"/>
        <dbReference type="ChEBI" id="CHEBI:78948"/>
        <dbReference type="EC" id="1.1.1.103"/>
    </reaction>
</comment>
<comment type="cofactor">
    <cofactor evidence="1">
        <name>Zn(2+)</name>
        <dbReference type="ChEBI" id="CHEBI:29105"/>
    </cofactor>
    <text evidence="1">Binds 2 Zn(2+) ions per subunit.</text>
</comment>
<comment type="pathway">
    <text evidence="1">Amino-acid degradation; L-threonine degradation via oxydo-reductase pathway; glycine from L-threonine: step 1/2.</text>
</comment>
<comment type="subunit">
    <text evidence="1">Homotetramer.</text>
</comment>
<comment type="subcellular location">
    <subcellularLocation>
        <location evidence="1">Cytoplasm</location>
    </subcellularLocation>
</comment>
<comment type="similarity">
    <text evidence="1">Belongs to the zinc-containing alcohol dehydrogenase family.</text>
</comment>
<protein>
    <recommendedName>
        <fullName evidence="1">L-threonine 3-dehydrogenase</fullName>
        <shortName evidence="1">TDH</shortName>
        <ecNumber evidence="1">1.1.1.103</ecNumber>
    </recommendedName>
</protein>
<keyword id="KW-0963">Cytoplasm</keyword>
<keyword id="KW-0479">Metal-binding</keyword>
<keyword id="KW-0520">NAD</keyword>
<keyword id="KW-0560">Oxidoreductase</keyword>
<keyword id="KW-1185">Reference proteome</keyword>
<keyword id="KW-0862">Zinc</keyword>
<organism>
    <name type="scientific">Shewanella loihica (strain ATCC BAA-1088 / PV-4)</name>
    <dbReference type="NCBI Taxonomy" id="323850"/>
    <lineage>
        <taxon>Bacteria</taxon>
        <taxon>Pseudomonadati</taxon>
        <taxon>Pseudomonadota</taxon>
        <taxon>Gammaproteobacteria</taxon>
        <taxon>Alteromonadales</taxon>
        <taxon>Shewanellaceae</taxon>
        <taxon>Shewanella</taxon>
    </lineage>
</organism>
<sequence>MKALSKLKPEEGIWMVDAPKPEVGHNDLLIKIRKTAICGTDVHIYNWDEWSQNTIPVPMVVGHEYVGEVVEIGQEVRGFQIGDRVSGEGHITCGHCRNCRAGRTHLCRNTSGVGVNREGAFAEYLVIPAFNAFKIPDDISDDLASIFDPFGNAVHTALSFDLVGEDVLITGAGPIGIMAAAVCRHVGARHVVITDVNEYRLELAKKMGATRAVNVAKEKLEDVMQDLGMTEGFDVGLEMSGVPAAFHSMLDTMNHGGKIAMLGIPGGDMAIDWSKVIFKGLIIKGIYGREMFETWYKMASLIQSGLDISPIITHHYNVDDFQAGFDAMRSGQSGKVILSWD</sequence>
<accession>A3QJC8</accession>
<feature type="chain" id="PRO_1000051655" description="L-threonine 3-dehydrogenase">
    <location>
        <begin position="1"/>
        <end position="341"/>
    </location>
</feature>
<feature type="active site" description="Charge relay system" evidence="1">
    <location>
        <position position="40"/>
    </location>
</feature>
<feature type="active site" description="Charge relay system" evidence="1">
    <location>
        <position position="43"/>
    </location>
</feature>
<feature type="binding site" evidence="1">
    <location>
        <position position="38"/>
    </location>
    <ligand>
        <name>Zn(2+)</name>
        <dbReference type="ChEBI" id="CHEBI:29105"/>
        <label>1</label>
        <note>catalytic</note>
    </ligand>
</feature>
<feature type="binding site" evidence="1">
    <location>
        <position position="63"/>
    </location>
    <ligand>
        <name>Zn(2+)</name>
        <dbReference type="ChEBI" id="CHEBI:29105"/>
        <label>1</label>
        <note>catalytic</note>
    </ligand>
</feature>
<feature type="binding site" evidence="1">
    <location>
        <position position="64"/>
    </location>
    <ligand>
        <name>Zn(2+)</name>
        <dbReference type="ChEBI" id="CHEBI:29105"/>
        <label>1</label>
        <note>catalytic</note>
    </ligand>
</feature>
<feature type="binding site" evidence="1">
    <location>
        <position position="93"/>
    </location>
    <ligand>
        <name>Zn(2+)</name>
        <dbReference type="ChEBI" id="CHEBI:29105"/>
        <label>2</label>
    </ligand>
</feature>
<feature type="binding site" evidence="1">
    <location>
        <position position="96"/>
    </location>
    <ligand>
        <name>Zn(2+)</name>
        <dbReference type="ChEBI" id="CHEBI:29105"/>
        <label>2</label>
    </ligand>
</feature>
<feature type="binding site" evidence="1">
    <location>
        <position position="99"/>
    </location>
    <ligand>
        <name>Zn(2+)</name>
        <dbReference type="ChEBI" id="CHEBI:29105"/>
        <label>2</label>
    </ligand>
</feature>
<feature type="binding site" evidence="1">
    <location>
        <position position="107"/>
    </location>
    <ligand>
        <name>Zn(2+)</name>
        <dbReference type="ChEBI" id="CHEBI:29105"/>
        <label>2</label>
    </ligand>
</feature>
<feature type="binding site" evidence="1">
    <location>
        <position position="175"/>
    </location>
    <ligand>
        <name>NAD(+)</name>
        <dbReference type="ChEBI" id="CHEBI:57540"/>
    </ligand>
</feature>
<feature type="binding site" evidence="1">
    <location>
        <position position="195"/>
    </location>
    <ligand>
        <name>NAD(+)</name>
        <dbReference type="ChEBI" id="CHEBI:57540"/>
    </ligand>
</feature>
<feature type="binding site" evidence="1">
    <location>
        <position position="200"/>
    </location>
    <ligand>
        <name>NAD(+)</name>
        <dbReference type="ChEBI" id="CHEBI:57540"/>
    </ligand>
</feature>
<feature type="binding site" evidence="1">
    <location>
        <begin position="262"/>
        <end position="264"/>
    </location>
    <ligand>
        <name>NAD(+)</name>
        <dbReference type="ChEBI" id="CHEBI:57540"/>
    </ligand>
</feature>
<feature type="binding site" evidence="1">
    <location>
        <begin position="286"/>
        <end position="287"/>
    </location>
    <ligand>
        <name>NAD(+)</name>
        <dbReference type="ChEBI" id="CHEBI:57540"/>
    </ligand>
</feature>
<feature type="site" description="Important for catalytic activity for the proton relay mechanism but does not participate directly in the coordination of zinc atom" evidence="1">
    <location>
        <position position="148"/>
    </location>
</feature>
<gene>
    <name evidence="1" type="primary">tdh</name>
    <name type="ordered locus">Shew_3710</name>
</gene>
<evidence type="ECO:0000255" key="1">
    <source>
        <dbReference type="HAMAP-Rule" id="MF_00627"/>
    </source>
</evidence>